<evidence type="ECO:0000255" key="1">
    <source>
        <dbReference type="HAMAP-Rule" id="MF_01343"/>
    </source>
</evidence>
<evidence type="ECO:0000305" key="2"/>
<dbReference type="EMBL" id="CP001252">
    <property type="protein sequence ID" value="ACK45646.1"/>
    <property type="molecule type" value="Genomic_DNA"/>
</dbReference>
<dbReference type="RefSeq" id="WP_006082713.1">
    <property type="nucleotide sequence ID" value="NC_011663.1"/>
</dbReference>
<dbReference type="SMR" id="B8E6N5"/>
<dbReference type="GeneID" id="11773456"/>
<dbReference type="KEGG" id="sbp:Sbal223_1131"/>
<dbReference type="HOGENOM" id="CLU_148518_0_0_6"/>
<dbReference type="Proteomes" id="UP000002507">
    <property type="component" value="Chromosome"/>
</dbReference>
<dbReference type="GO" id="GO:0022627">
    <property type="term" value="C:cytosolic small ribosomal subunit"/>
    <property type="evidence" value="ECO:0007669"/>
    <property type="project" value="TreeGrafter"/>
</dbReference>
<dbReference type="GO" id="GO:0019843">
    <property type="term" value="F:rRNA binding"/>
    <property type="evidence" value="ECO:0007669"/>
    <property type="project" value="UniProtKB-UniRule"/>
</dbReference>
<dbReference type="GO" id="GO:0003735">
    <property type="term" value="F:structural constituent of ribosome"/>
    <property type="evidence" value="ECO:0007669"/>
    <property type="project" value="InterPro"/>
</dbReference>
<dbReference type="GO" id="GO:0006412">
    <property type="term" value="P:translation"/>
    <property type="evidence" value="ECO:0007669"/>
    <property type="project" value="UniProtKB-UniRule"/>
</dbReference>
<dbReference type="CDD" id="cd00353">
    <property type="entry name" value="Ribosomal_S15p_S13e"/>
    <property type="match status" value="1"/>
</dbReference>
<dbReference type="FunFam" id="1.10.287.10:FF:000002">
    <property type="entry name" value="30S ribosomal protein S15"/>
    <property type="match status" value="1"/>
</dbReference>
<dbReference type="Gene3D" id="6.10.250.3130">
    <property type="match status" value="1"/>
</dbReference>
<dbReference type="Gene3D" id="1.10.287.10">
    <property type="entry name" value="S15/NS1, RNA-binding"/>
    <property type="match status" value="1"/>
</dbReference>
<dbReference type="HAMAP" id="MF_01343_B">
    <property type="entry name" value="Ribosomal_uS15_B"/>
    <property type="match status" value="1"/>
</dbReference>
<dbReference type="InterPro" id="IPR000589">
    <property type="entry name" value="Ribosomal_uS15"/>
</dbReference>
<dbReference type="InterPro" id="IPR005290">
    <property type="entry name" value="Ribosomal_uS15_bac-type"/>
</dbReference>
<dbReference type="InterPro" id="IPR009068">
    <property type="entry name" value="uS15_NS1_RNA-bd_sf"/>
</dbReference>
<dbReference type="NCBIfam" id="TIGR00952">
    <property type="entry name" value="S15_bact"/>
    <property type="match status" value="1"/>
</dbReference>
<dbReference type="PANTHER" id="PTHR23321">
    <property type="entry name" value="RIBOSOMAL PROTEIN S15, BACTERIAL AND ORGANELLAR"/>
    <property type="match status" value="1"/>
</dbReference>
<dbReference type="PANTHER" id="PTHR23321:SF26">
    <property type="entry name" value="SMALL RIBOSOMAL SUBUNIT PROTEIN US15M"/>
    <property type="match status" value="1"/>
</dbReference>
<dbReference type="Pfam" id="PF00312">
    <property type="entry name" value="Ribosomal_S15"/>
    <property type="match status" value="1"/>
</dbReference>
<dbReference type="SMART" id="SM01387">
    <property type="entry name" value="Ribosomal_S15"/>
    <property type="match status" value="1"/>
</dbReference>
<dbReference type="SUPFAM" id="SSF47060">
    <property type="entry name" value="S15/NS1 RNA-binding domain"/>
    <property type="match status" value="1"/>
</dbReference>
<dbReference type="PROSITE" id="PS00362">
    <property type="entry name" value="RIBOSOMAL_S15"/>
    <property type="match status" value="1"/>
</dbReference>
<reference key="1">
    <citation type="submission" date="2008-12" db="EMBL/GenBank/DDBJ databases">
        <title>Complete sequence of chromosome of Shewanella baltica OS223.</title>
        <authorList>
            <consortium name="US DOE Joint Genome Institute"/>
            <person name="Lucas S."/>
            <person name="Copeland A."/>
            <person name="Lapidus A."/>
            <person name="Glavina del Rio T."/>
            <person name="Dalin E."/>
            <person name="Tice H."/>
            <person name="Bruce D."/>
            <person name="Goodwin L."/>
            <person name="Pitluck S."/>
            <person name="Chertkov O."/>
            <person name="Meincke L."/>
            <person name="Brettin T."/>
            <person name="Detter J.C."/>
            <person name="Han C."/>
            <person name="Kuske C.R."/>
            <person name="Larimer F."/>
            <person name="Land M."/>
            <person name="Hauser L."/>
            <person name="Kyrpides N."/>
            <person name="Ovchinnikova G."/>
            <person name="Brettar I."/>
            <person name="Rodrigues J."/>
            <person name="Konstantinidis K."/>
            <person name="Tiedje J."/>
        </authorList>
    </citation>
    <scope>NUCLEOTIDE SEQUENCE [LARGE SCALE GENOMIC DNA]</scope>
    <source>
        <strain>OS223</strain>
    </source>
</reference>
<gene>
    <name evidence="1" type="primary">rpsO</name>
    <name type="ordered locus">Sbal223_1131</name>
</gene>
<keyword id="KW-0687">Ribonucleoprotein</keyword>
<keyword id="KW-0689">Ribosomal protein</keyword>
<keyword id="KW-0694">RNA-binding</keyword>
<keyword id="KW-0699">rRNA-binding</keyword>
<accession>B8E6N5</accession>
<feature type="chain" id="PRO_1000166436" description="Small ribosomal subunit protein uS15">
    <location>
        <begin position="1"/>
        <end position="89"/>
    </location>
</feature>
<organism>
    <name type="scientific">Shewanella baltica (strain OS223)</name>
    <dbReference type="NCBI Taxonomy" id="407976"/>
    <lineage>
        <taxon>Bacteria</taxon>
        <taxon>Pseudomonadati</taxon>
        <taxon>Pseudomonadota</taxon>
        <taxon>Gammaproteobacteria</taxon>
        <taxon>Alteromonadales</taxon>
        <taxon>Shewanellaceae</taxon>
        <taxon>Shewanella</taxon>
    </lineage>
</organism>
<protein>
    <recommendedName>
        <fullName evidence="1">Small ribosomal subunit protein uS15</fullName>
    </recommendedName>
    <alternativeName>
        <fullName evidence="2">30S ribosomal protein S15</fullName>
    </alternativeName>
</protein>
<comment type="function">
    <text evidence="1">One of the primary rRNA binding proteins, it binds directly to 16S rRNA where it helps nucleate assembly of the platform of the 30S subunit by binding and bridging several RNA helices of the 16S rRNA.</text>
</comment>
<comment type="function">
    <text evidence="1">Forms an intersubunit bridge (bridge B4) with the 23S rRNA of the 50S subunit in the ribosome.</text>
</comment>
<comment type="subunit">
    <text evidence="1">Part of the 30S ribosomal subunit. Forms a bridge to the 50S subunit in the 70S ribosome, contacting the 23S rRNA.</text>
</comment>
<comment type="similarity">
    <text evidence="1">Belongs to the universal ribosomal protein uS15 family.</text>
</comment>
<proteinExistence type="inferred from homology"/>
<sequence>MSLSTEVKAKILADFGRCENDTGSTEVQVALLTAQINHLQAHFKEHIHDHHSRRGLLRMVSSRRKLTAYLKRTDVARYTALIQKLGLRR</sequence>
<name>RS15_SHEB2</name>